<evidence type="ECO:0000255" key="1">
    <source>
        <dbReference type="HAMAP-Rule" id="MF_00382"/>
    </source>
</evidence>
<evidence type="ECO:0000305" key="2"/>
<keyword id="KW-1185">Reference proteome</keyword>
<keyword id="KW-0687">Ribonucleoprotein</keyword>
<keyword id="KW-0689">Ribosomal protein</keyword>
<keyword id="KW-0694">RNA-binding</keyword>
<keyword id="KW-0699">rRNA-binding</keyword>
<reference key="1">
    <citation type="journal article" date="2005" name="Infect. Immun.">
        <title>Whole-genome analyses of speciation events in pathogenic Brucellae.</title>
        <authorList>
            <person name="Chain P.S."/>
            <person name="Comerci D.J."/>
            <person name="Tolmasky M.E."/>
            <person name="Larimer F.W."/>
            <person name="Malfatti S.A."/>
            <person name="Vergez L.M."/>
            <person name="Aguero F."/>
            <person name="Land M.L."/>
            <person name="Ugalde R.A."/>
            <person name="Garcia E."/>
        </authorList>
    </citation>
    <scope>NUCLEOTIDE SEQUENCE [LARGE SCALE GENOMIC DNA]</scope>
    <source>
        <strain>2308</strain>
    </source>
</reference>
<dbReference type="EMBL" id="AM040264">
    <property type="protein sequence ID" value="CAJ12080.1"/>
    <property type="molecule type" value="Genomic_DNA"/>
</dbReference>
<dbReference type="RefSeq" id="WP_002965185.1">
    <property type="nucleotide sequence ID" value="NZ_KN046823.1"/>
</dbReference>
<dbReference type="SMR" id="Q2YQV7"/>
<dbReference type="STRING" id="359391.BAB1_2124"/>
<dbReference type="GeneID" id="97534622"/>
<dbReference type="KEGG" id="bmf:BAB1_2124"/>
<dbReference type="PATRIC" id="fig|359391.11.peg.1356"/>
<dbReference type="HOGENOM" id="CLU_123265_0_1_5"/>
<dbReference type="PhylomeDB" id="Q2YQV7"/>
<dbReference type="Proteomes" id="UP000002719">
    <property type="component" value="Chromosome I"/>
</dbReference>
<dbReference type="GO" id="GO:1990904">
    <property type="term" value="C:ribonucleoprotein complex"/>
    <property type="evidence" value="ECO:0007669"/>
    <property type="project" value="UniProtKB-KW"/>
</dbReference>
<dbReference type="GO" id="GO:0005840">
    <property type="term" value="C:ribosome"/>
    <property type="evidence" value="ECO:0007669"/>
    <property type="project" value="UniProtKB-KW"/>
</dbReference>
<dbReference type="GO" id="GO:0019843">
    <property type="term" value="F:rRNA binding"/>
    <property type="evidence" value="ECO:0007669"/>
    <property type="project" value="UniProtKB-UniRule"/>
</dbReference>
<dbReference type="GO" id="GO:0003735">
    <property type="term" value="F:structural constituent of ribosome"/>
    <property type="evidence" value="ECO:0007669"/>
    <property type="project" value="InterPro"/>
</dbReference>
<dbReference type="GO" id="GO:0000027">
    <property type="term" value="P:ribosomal large subunit assembly"/>
    <property type="evidence" value="ECO:0007669"/>
    <property type="project" value="UniProtKB-UniRule"/>
</dbReference>
<dbReference type="GO" id="GO:0006412">
    <property type="term" value="P:translation"/>
    <property type="evidence" value="ECO:0007669"/>
    <property type="project" value="InterPro"/>
</dbReference>
<dbReference type="CDD" id="cd07026">
    <property type="entry name" value="Ribosomal_L20"/>
    <property type="match status" value="1"/>
</dbReference>
<dbReference type="FunFam" id="1.10.1900.20:FF:000001">
    <property type="entry name" value="50S ribosomal protein L20"/>
    <property type="match status" value="1"/>
</dbReference>
<dbReference type="Gene3D" id="6.10.160.10">
    <property type="match status" value="1"/>
</dbReference>
<dbReference type="Gene3D" id="1.10.1900.20">
    <property type="entry name" value="Ribosomal protein L20"/>
    <property type="match status" value="1"/>
</dbReference>
<dbReference type="HAMAP" id="MF_00382">
    <property type="entry name" value="Ribosomal_bL20"/>
    <property type="match status" value="1"/>
</dbReference>
<dbReference type="InterPro" id="IPR005813">
    <property type="entry name" value="Ribosomal_bL20"/>
</dbReference>
<dbReference type="InterPro" id="IPR049946">
    <property type="entry name" value="RIBOSOMAL_L20_CS"/>
</dbReference>
<dbReference type="InterPro" id="IPR035566">
    <property type="entry name" value="Ribosomal_protein_bL20_C"/>
</dbReference>
<dbReference type="NCBIfam" id="TIGR01032">
    <property type="entry name" value="rplT_bact"/>
    <property type="match status" value="1"/>
</dbReference>
<dbReference type="PANTHER" id="PTHR10986">
    <property type="entry name" value="39S RIBOSOMAL PROTEIN L20"/>
    <property type="match status" value="1"/>
</dbReference>
<dbReference type="Pfam" id="PF00453">
    <property type="entry name" value="Ribosomal_L20"/>
    <property type="match status" value="1"/>
</dbReference>
<dbReference type="PRINTS" id="PR00062">
    <property type="entry name" value="RIBOSOMALL20"/>
</dbReference>
<dbReference type="SUPFAM" id="SSF74731">
    <property type="entry name" value="Ribosomal protein L20"/>
    <property type="match status" value="1"/>
</dbReference>
<dbReference type="PROSITE" id="PS00937">
    <property type="entry name" value="RIBOSOMAL_L20"/>
    <property type="match status" value="1"/>
</dbReference>
<accession>Q2YQV7</accession>
<protein>
    <recommendedName>
        <fullName evidence="1">Large ribosomal subunit protein bL20</fullName>
    </recommendedName>
    <alternativeName>
        <fullName evidence="2">50S ribosomal protein L20</fullName>
    </alternativeName>
</protein>
<proteinExistence type="inferred from homology"/>
<comment type="function">
    <text evidence="1">Binds directly to 23S ribosomal RNA and is necessary for the in vitro assembly process of the 50S ribosomal subunit. It is not involved in the protein synthesizing functions of that subunit.</text>
</comment>
<comment type="similarity">
    <text evidence="1">Belongs to the bacterial ribosomal protein bL20 family.</text>
</comment>
<feature type="chain" id="PRO_0000243662" description="Large ribosomal subunit protein bL20">
    <location>
        <begin position="1"/>
        <end position="134"/>
    </location>
</feature>
<organism>
    <name type="scientific">Brucella abortus (strain 2308)</name>
    <dbReference type="NCBI Taxonomy" id="359391"/>
    <lineage>
        <taxon>Bacteria</taxon>
        <taxon>Pseudomonadati</taxon>
        <taxon>Pseudomonadota</taxon>
        <taxon>Alphaproteobacteria</taxon>
        <taxon>Hyphomicrobiales</taxon>
        <taxon>Brucellaceae</taxon>
        <taxon>Brucella/Ochrobactrum group</taxon>
        <taxon>Brucella</taxon>
    </lineage>
</organism>
<gene>
    <name evidence="1" type="primary">rplT</name>
    <name type="ordered locus">BAB1_2124</name>
</gene>
<sequence length="134" mass="15095">MARVKRGVTAHAKHKKVLDQAAGFRGRRKNTIRTAKAAVDRSKQYAYRDRKNRKRSFRALWIQRINAAVREQGLTYGRFIDGLAKAGIEIDRKVLSDIAIHEPEAFAALVASAKKALEYLKNTSMPNAFEGAVR</sequence>
<name>RL20_BRUA2</name>